<evidence type="ECO:0000250" key="1">
    <source>
        <dbReference type="UniProtKB" id="Q9UNW1"/>
    </source>
</evidence>
<evidence type="ECO:0000250" key="2">
    <source>
        <dbReference type="UniProtKB" id="Q9Z2L6"/>
    </source>
</evidence>
<evidence type="ECO:0000255" key="3"/>
<evidence type="ECO:0000256" key="4">
    <source>
        <dbReference type="SAM" id="MobiDB-lite"/>
    </source>
</evidence>
<evidence type="ECO:0000269" key="5">
    <source>
    </source>
</evidence>
<evidence type="ECO:0000303" key="6">
    <source>
    </source>
</evidence>
<evidence type="ECO:0000305" key="7"/>
<evidence type="ECO:0000305" key="8">
    <source>
    </source>
</evidence>
<keyword id="KW-0378">Hydrolase</keyword>
<keyword id="KW-0472">Membrane</keyword>
<keyword id="KW-1185">Reference proteome</keyword>
<keyword id="KW-0732">Signal</keyword>
<keyword id="KW-0812">Transmembrane</keyword>
<keyword id="KW-1133">Transmembrane helix</keyword>
<gene>
    <name type="primary">mipp1</name>
    <name type="ORF">DDB_G0285339</name>
</gene>
<reference key="1">
    <citation type="journal article" date="2005" name="Nature">
        <title>The genome of the social amoeba Dictyostelium discoideum.</title>
        <authorList>
            <person name="Eichinger L."/>
            <person name="Pachebat J.A."/>
            <person name="Gloeckner G."/>
            <person name="Rajandream M.A."/>
            <person name="Sucgang R."/>
            <person name="Berriman M."/>
            <person name="Song J."/>
            <person name="Olsen R."/>
            <person name="Szafranski K."/>
            <person name="Xu Q."/>
            <person name="Tunggal B."/>
            <person name="Kummerfeld S."/>
            <person name="Madera M."/>
            <person name="Konfortov B.A."/>
            <person name="Rivero F."/>
            <person name="Bankier A.T."/>
            <person name="Lehmann R."/>
            <person name="Hamlin N."/>
            <person name="Davies R."/>
            <person name="Gaudet P."/>
            <person name="Fey P."/>
            <person name="Pilcher K."/>
            <person name="Chen G."/>
            <person name="Saunders D."/>
            <person name="Sodergren E.J."/>
            <person name="Davis P."/>
            <person name="Kerhornou A."/>
            <person name="Nie X."/>
            <person name="Hall N."/>
            <person name="Anjard C."/>
            <person name="Hemphill L."/>
            <person name="Bason N."/>
            <person name="Farbrother P."/>
            <person name="Desany B."/>
            <person name="Just E."/>
            <person name="Morio T."/>
            <person name="Rost R."/>
            <person name="Churcher C.M."/>
            <person name="Cooper J."/>
            <person name="Haydock S."/>
            <person name="van Driessche N."/>
            <person name="Cronin A."/>
            <person name="Goodhead I."/>
            <person name="Muzny D.M."/>
            <person name="Mourier T."/>
            <person name="Pain A."/>
            <person name="Lu M."/>
            <person name="Harper D."/>
            <person name="Lindsay R."/>
            <person name="Hauser H."/>
            <person name="James K.D."/>
            <person name="Quiles M."/>
            <person name="Madan Babu M."/>
            <person name="Saito T."/>
            <person name="Buchrieser C."/>
            <person name="Wardroper A."/>
            <person name="Felder M."/>
            <person name="Thangavelu M."/>
            <person name="Johnson D."/>
            <person name="Knights A."/>
            <person name="Loulseged H."/>
            <person name="Mungall K.L."/>
            <person name="Oliver K."/>
            <person name="Price C."/>
            <person name="Quail M.A."/>
            <person name="Urushihara H."/>
            <person name="Hernandez J."/>
            <person name="Rabbinowitsch E."/>
            <person name="Steffen D."/>
            <person name="Sanders M."/>
            <person name="Ma J."/>
            <person name="Kohara Y."/>
            <person name="Sharp S."/>
            <person name="Simmonds M.N."/>
            <person name="Spiegler S."/>
            <person name="Tivey A."/>
            <person name="Sugano S."/>
            <person name="White B."/>
            <person name="Walker D."/>
            <person name="Woodward J.R."/>
            <person name="Winckler T."/>
            <person name="Tanaka Y."/>
            <person name="Shaulsky G."/>
            <person name="Schleicher M."/>
            <person name="Weinstock G.M."/>
            <person name="Rosenthal A."/>
            <person name="Cox E.C."/>
            <person name="Chisholm R.L."/>
            <person name="Gibbs R.A."/>
            <person name="Loomis W.F."/>
            <person name="Platzer M."/>
            <person name="Kay R.R."/>
            <person name="Williams J.G."/>
            <person name="Dear P.H."/>
            <person name="Noegel A.A."/>
            <person name="Barrell B.G."/>
            <person name="Kuspa A."/>
        </authorList>
    </citation>
    <scope>NUCLEOTIDE SEQUENCE [LARGE SCALE GENOMIC DNA]</scope>
    <source>
        <strain>AX4</strain>
    </source>
</reference>
<reference key="2">
    <citation type="journal article" date="2008" name="Proc. Natl. Acad. Sci. U.S.A.">
        <title>Dephosphorylation of 2,3-bisphosphoglycerate by MIPP expands the regulatory capacity of the Rapoport-Luebering glycolytic shunt.</title>
        <authorList>
            <person name="Cho J."/>
            <person name="King J.S."/>
            <person name="Qian X."/>
            <person name="Harwood A.J."/>
            <person name="Shears S.B."/>
        </authorList>
    </citation>
    <scope>FUNCTION AS 2,3-BISPHOSPHOGLYCERATE 3-PHOSPHATASE</scope>
    <scope>CATALYTIC ACTIVITY</scope>
</reference>
<organism>
    <name type="scientific">Dictyostelium discoideum</name>
    <name type="common">Social amoeba</name>
    <dbReference type="NCBI Taxonomy" id="44689"/>
    <lineage>
        <taxon>Eukaryota</taxon>
        <taxon>Amoebozoa</taxon>
        <taxon>Evosea</taxon>
        <taxon>Eumycetozoa</taxon>
        <taxon>Dictyostelia</taxon>
        <taxon>Dictyosteliales</taxon>
        <taxon>Dictyosteliaceae</taxon>
        <taxon>Dictyostelium</taxon>
    </lineage>
</organism>
<feature type="signal peptide" evidence="3">
    <location>
        <begin position="1"/>
        <end position="23"/>
    </location>
</feature>
<feature type="chain" id="PRO_0000417526" description="Multiple inositol polyphosphate phosphatase 1">
    <location>
        <begin position="24"/>
        <end position="635"/>
    </location>
</feature>
<feature type="topological domain" description="Extracellular" evidence="3">
    <location>
        <begin position="24"/>
        <end position="565"/>
    </location>
</feature>
<feature type="transmembrane region" description="Helical" evidence="3">
    <location>
        <begin position="566"/>
        <end position="586"/>
    </location>
</feature>
<feature type="topological domain" description="Cytoplasmic" evidence="3">
    <location>
        <begin position="587"/>
        <end position="635"/>
    </location>
</feature>
<feature type="region of interest" description="Disordered" evidence="4">
    <location>
        <begin position="66"/>
        <end position="102"/>
    </location>
</feature>
<feature type="region of interest" description="Disordered" evidence="4">
    <location>
        <begin position="380"/>
        <end position="425"/>
    </location>
</feature>
<feature type="region of interest" description="Disordered" evidence="4">
    <location>
        <begin position="614"/>
        <end position="635"/>
    </location>
</feature>
<feature type="compositionally biased region" description="Low complexity" evidence="4">
    <location>
        <begin position="67"/>
        <end position="99"/>
    </location>
</feature>
<feature type="compositionally biased region" description="Low complexity" evidence="4">
    <location>
        <begin position="380"/>
        <end position="421"/>
    </location>
</feature>
<feature type="compositionally biased region" description="Low complexity" evidence="4">
    <location>
        <begin position="614"/>
        <end position="624"/>
    </location>
</feature>
<feature type="active site" evidence="2">
    <location>
        <position position="116"/>
    </location>
</feature>
<comment type="function">
    <text evidence="1 5">Probable multiple inositol polyphosphate phosphatase that hydrolyzes 1D-myo-inositol 1,3,4,5,6-pentakisphosphate (InsP5[2OH]) and 1D-myo-inositol hexakisphosphate (InsP6) to a range of less phosphorylated inositol phosphates. This regulates the availability of these various small molecule second messengers and metal chelators which control many aspects of cell physiology (By similarity). May have a dual substrate specificity, and function as a 2,3-bisphosphoglycerate 3-phosphatase hydrolyzing 2,3-bisphosphoglycerate to 2-phosphoglycerate. 2,3-bisphosphoglycerate (BPG) is formed as part of the Rapoport-Luebering glycolytic bypass (PubMed:18413611).</text>
</comment>
<comment type="catalytic activity">
    <reaction evidence="1">
        <text>1D-myo-inositol hexakisphosphate + H2O = 1D-myo-inositol 1,2,4,5,6-pentakisphosphate + phosphate</text>
        <dbReference type="Rhea" id="RHEA:16989"/>
        <dbReference type="ChEBI" id="CHEBI:15377"/>
        <dbReference type="ChEBI" id="CHEBI:43474"/>
        <dbReference type="ChEBI" id="CHEBI:57798"/>
        <dbReference type="ChEBI" id="CHEBI:58130"/>
        <dbReference type="EC" id="3.1.3.62"/>
    </reaction>
    <physiologicalReaction direction="left-to-right" evidence="1">
        <dbReference type="Rhea" id="RHEA:16990"/>
    </physiologicalReaction>
</comment>
<comment type="catalytic activity">
    <reaction evidence="1">
        <text>1D-myo-inositol 1,2,4,5,6-pentakisphosphate + H2O = 1D-myo-inositol 1,2,5,6-tetrakisphosphate + phosphate</text>
        <dbReference type="Rhea" id="RHEA:77115"/>
        <dbReference type="ChEBI" id="CHEBI:15377"/>
        <dbReference type="ChEBI" id="CHEBI:43474"/>
        <dbReference type="ChEBI" id="CHEBI:57798"/>
        <dbReference type="ChEBI" id="CHEBI:195535"/>
        <dbReference type="EC" id="3.1.3.62"/>
    </reaction>
    <physiologicalReaction direction="left-to-right" evidence="1">
        <dbReference type="Rhea" id="RHEA:77116"/>
    </physiologicalReaction>
</comment>
<comment type="catalytic activity">
    <reaction evidence="1">
        <text>1D-myo-inositol 1,2,5,6-tetrakisphosphate + H2O = 1D-myo-inositol 1,2,6-trisphosphate + phosphate</text>
        <dbReference type="Rhea" id="RHEA:77119"/>
        <dbReference type="ChEBI" id="CHEBI:15377"/>
        <dbReference type="ChEBI" id="CHEBI:43474"/>
        <dbReference type="ChEBI" id="CHEBI:195535"/>
        <dbReference type="ChEBI" id="CHEBI:195537"/>
        <dbReference type="EC" id="3.1.3.62"/>
    </reaction>
    <physiologicalReaction direction="left-to-right" evidence="1">
        <dbReference type="Rhea" id="RHEA:77120"/>
    </physiologicalReaction>
</comment>
<comment type="catalytic activity">
    <reaction evidence="1">
        <text>1D-myo-inositol 1,2,6-trisphosphate + H2O = 1D-myo-inositol 1,2-bisphosphate + phosphate</text>
        <dbReference type="Rhea" id="RHEA:77131"/>
        <dbReference type="ChEBI" id="CHEBI:15377"/>
        <dbReference type="ChEBI" id="CHEBI:43474"/>
        <dbReference type="ChEBI" id="CHEBI:195537"/>
        <dbReference type="ChEBI" id="CHEBI:195539"/>
        <dbReference type="EC" id="3.1.3.62"/>
    </reaction>
    <physiologicalReaction direction="left-to-right" evidence="1">
        <dbReference type="Rhea" id="RHEA:77132"/>
    </physiologicalReaction>
</comment>
<comment type="catalytic activity">
    <reaction evidence="1">
        <text>1D-myo-inositol 1,2-bisphosphate + H2O = 1D-myo-inositol 2-phosphate + phosphate</text>
        <dbReference type="Rhea" id="RHEA:77135"/>
        <dbReference type="ChEBI" id="CHEBI:15377"/>
        <dbReference type="ChEBI" id="CHEBI:43474"/>
        <dbReference type="ChEBI" id="CHEBI:84142"/>
        <dbReference type="ChEBI" id="CHEBI:195539"/>
        <dbReference type="EC" id="3.1.3.62"/>
    </reaction>
    <physiologicalReaction direction="left-to-right" evidence="1">
        <dbReference type="Rhea" id="RHEA:77136"/>
    </physiologicalReaction>
</comment>
<comment type="catalytic activity">
    <reaction evidence="5">
        <text>(2R)-2,3-bisphosphoglycerate + H2O = (2R)-2-phosphoglycerate + phosphate</text>
        <dbReference type="Rhea" id="RHEA:27381"/>
        <dbReference type="ChEBI" id="CHEBI:15377"/>
        <dbReference type="ChEBI" id="CHEBI:43474"/>
        <dbReference type="ChEBI" id="CHEBI:58248"/>
        <dbReference type="ChEBI" id="CHEBI:58289"/>
        <dbReference type="EC" id="3.1.3.80"/>
    </reaction>
    <physiologicalReaction direction="left-to-right" evidence="8">
        <dbReference type="Rhea" id="RHEA:27382"/>
    </physiologicalReaction>
</comment>
<comment type="subcellular location">
    <subcellularLocation>
        <location evidence="3">Membrane</location>
        <topology evidence="3">Single-pass type I membrane protein</topology>
    </subcellularLocation>
</comment>
<comment type="similarity">
    <text evidence="7">Belongs to the histidine acid phosphatase family. MINPP1 subfamily.</text>
</comment>
<accession>Q54ND5</accession>
<sequence>MMVKIKNIIILFCIFGLLSNVSSLSSSSSSSQSSDNNGNLSPIQDYDLEFLSKHLTTKTPYWILTKNGDSNSQGDGSSGNSNSNSNSNSNSNSNSDSSNEPPEQCKLISIDFIARHGSRMPVLNSIEKLKEMTTSILEYKEQVNQGFNWIFNYSVPYPSDIAGNLILQGQYEHYNISKRLLKKYPLFFEPMKYKPQSYSITSTAISRTGISASAFSYGLLQGTGSLGVDGFQPVFIETASLDQDILLRFFATCNQYVDQLKNGTLINKDEQTKWNQMVFPNISNEISERLGLSDIWLPTSNVISDIFEACAYEISINNISDHWCSLLSKQNILDWEYSQDLSNYWLKSYGHEINYQIATPLLNDILSGFDIYINNNNNGSSSSSSSSSSNNGDNSGSNGSSGSGSSTSTSSNDNGSTNNNDNKVEPTSILRFGHAETIIPFISLLGLYKDEQKLFANSSTEQIENRKFRTSVVSPYASNIAMFLFDCGSAADGFKILVQHNELPVLVPGCDEIYCDYQQFKSIFKQGIDNFKWNSYCNINDDDSGSSGGDSGNGNGNDSHSKKSSYFLAIFIPITFLVGGTIGGIFTYFSYEKIMQVKNRKKLTQYGNDEFISSPKSKSFSFKPTKFDSRSPLIQ</sequence>
<name>MINP1_DICDI</name>
<protein>
    <recommendedName>
        <fullName evidence="1">Multiple inositol polyphosphate phosphatase 1</fullName>
        <shortName evidence="6">Ddmipp1</shortName>
        <ecNumber evidence="1">3.1.3.62</ecNumber>
    </recommendedName>
    <alternativeName>
        <fullName evidence="8">2,3-bisphosphoglycerate 3-phosphatase</fullName>
        <shortName evidence="8">2,3-BPG phosphatase</shortName>
        <ecNumber evidence="5">3.1.3.80</ecNumber>
    </alternativeName>
</protein>
<proteinExistence type="evidence at protein level"/>
<dbReference type="EC" id="3.1.3.62" evidence="1"/>
<dbReference type="EC" id="3.1.3.80" evidence="5"/>
<dbReference type="EMBL" id="AAFI02000079">
    <property type="protein sequence ID" value="EAL64744.1"/>
    <property type="molecule type" value="Genomic_DNA"/>
</dbReference>
<dbReference type="RefSeq" id="XP_638245.1">
    <property type="nucleotide sequence ID" value="XM_633153.1"/>
</dbReference>
<dbReference type="SMR" id="Q54ND5"/>
<dbReference type="FunCoup" id="Q54ND5">
    <property type="interactions" value="262"/>
</dbReference>
<dbReference type="STRING" id="44689.Q54ND5"/>
<dbReference type="PaxDb" id="44689-DDB0266617"/>
<dbReference type="EnsemblProtists" id="EAL64744">
    <property type="protein sequence ID" value="EAL64744"/>
    <property type="gene ID" value="DDB_G0285339"/>
</dbReference>
<dbReference type="GeneID" id="8625053"/>
<dbReference type="KEGG" id="ddi:DDB_G0285339"/>
<dbReference type="dictyBase" id="DDB_G0285339">
    <property type="gene designation" value="mipp1"/>
</dbReference>
<dbReference type="VEuPathDB" id="AmoebaDB:DDB_G0285339"/>
<dbReference type="eggNOG" id="KOG1382">
    <property type="taxonomic scope" value="Eukaryota"/>
</dbReference>
<dbReference type="HOGENOM" id="CLU_029165_1_1_1"/>
<dbReference type="InParanoid" id="Q54ND5"/>
<dbReference type="PhylomeDB" id="Q54ND5"/>
<dbReference type="Reactome" id="R-DDI-1855231">
    <property type="pathway name" value="Synthesis of IPs in the ER lumen"/>
</dbReference>
<dbReference type="PRO" id="PR:Q54ND5"/>
<dbReference type="Proteomes" id="UP000002195">
    <property type="component" value="Chromosome 4"/>
</dbReference>
<dbReference type="GO" id="GO:0005829">
    <property type="term" value="C:cytosol"/>
    <property type="evidence" value="ECO:0000305"/>
    <property type="project" value="dictyBase"/>
</dbReference>
<dbReference type="GO" id="GO:0016020">
    <property type="term" value="C:membrane"/>
    <property type="evidence" value="ECO:0000304"/>
    <property type="project" value="dictyBase"/>
</dbReference>
<dbReference type="GO" id="GO:0016158">
    <property type="term" value="F:3-phytase activity"/>
    <property type="evidence" value="ECO:0007669"/>
    <property type="project" value="RHEA"/>
</dbReference>
<dbReference type="GO" id="GO:0003993">
    <property type="term" value="F:acid phosphatase activity"/>
    <property type="evidence" value="ECO:0000318"/>
    <property type="project" value="GO_Central"/>
</dbReference>
<dbReference type="GO" id="GO:0034417">
    <property type="term" value="F:bisphosphoglycerate 3-phosphatase activity"/>
    <property type="evidence" value="ECO:0000314"/>
    <property type="project" value="dictyBase"/>
</dbReference>
<dbReference type="GO" id="GO:0052745">
    <property type="term" value="F:inositol phosphate phosphatase activity"/>
    <property type="evidence" value="ECO:0000318"/>
    <property type="project" value="GO_Central"/>
</dbReference>
<dbReference type="GO" id="GO:0004446">
    <property type="term" value="F:inositol-hexakisphosphate phosphatase activity"/>
    <property type="evidence" value="ECO:0000314"/>
    <property type="project" value="dictyBase"/>
</dbReference>
<dbReference type="GO" id="GO:0006007">
    <property type="term" value="P:glucose catabolic process"/>
    <property type="evidence" value="ECO:0000314"/>
    <property type="project" value="dictyBase"/>
</dbReference>
<dbReference type="GO" id="GO:0032957">
    <property type="term" value="P:inositol trisphosphate metabolic process"/>
    <property type="evidence" value="ECO:0000314"/>
    <property type="project" value="dictyBase"/>
</dbReference>
<dbReference type="GO" id="GO:0010226">
    <property type="term" value="P:response to lithium ion"/>
    <property type="evidence" value="ECO:0000315"/>
    <property type="project" value="dictyBase"/>
</dbReference>
<dbReference type="CDD" id="cd07061">
    <property type="entry name" value="HP_HAP_like"/>
    <property type="match status" value="1"/>
</dbReference>
<dbReference type="Gene3D" id="3.40.50.1240">
    <property type="entry name" value="Phosphoglycerate mutase-like"/>
    <property type="match status" value="1"/>
</dbReference>
<dbReference type="InterPro" id="IPR033379">
    <property type="entry name" value="Acid_Pase_AS"/>
</dbReference>
<dbReference type="InterPro" id="IPR000560">
    <property type="entry name" value="His_Pase_clade-2"/>
</dbReference>
<dbReference type="InterPro" id="IPR029033">
    <property type="entry name" value="His_PPase_superfam"/>
</dbReference>
<dbReference type="PANTHER" id="PTHR20963:SF8">
    <property type="entry name" value="MULTIPLE INOSITOL POLYPHOSPHATE PHOSPHATASE 1"/>
    <property type="match status" value="1"/>
</dbReference>
<dbReference type="PANTHER" id="PTHR20963">
    <property type="entry name" value="MULTIPLE INOSITOL POLYPHOSPHATE PHOSPHATASE-RELATED"/>
    <property type="match status" value="1"/>
</dbReference>
<dbReference type="Pfam" id="PF00328">
    <property type="entry name" value="His_Phos_2"/>
    <property type="match status" value="1"/>
</dbReference>
<dbReference type="SUPFAM" id="SSF53254">
    <property type="entry name" value="Phosphoglycerate mutase-like"/>
    <property type="match status" value="1"/>
</dbReference>
<dbReference type="PROSITE" id="PS00616">
    <property type="entry name" value="HIS_ACID_PHOSPHAT_1"/>
    <property type="match status" value="1"/>
</dbReference>